<sequence>MAAGSTGERPFFEIITSIRYWIIHAVTLPAIFIAGFLFVYTGLAYDAFGTPRPDSYFQASESKAPVVTQRYDAKSQLDLRTK</sequence>
<proteinExistence type="inferred from homology"/>
<keyword id="KW-0249">Electron transport</keyword>
<keyword id="KW-0349">Heme</keyword>
<keyword id="KW-0408">Iron</keyword>
<keyword id="KW-0472">Membrane</keyword>
<keyword id="KW-0479">Metal-binding</keyword>
<keyword id="KW-0602">Photosynthesis</keyword>
<keyword id="KW-0604">Photosystem II</keyword>
<keyword id="KW-0793">Thylakoid</keyword>
<keyword id="KW-0812">Transmembrane</keyword>
<keyword id="KW-1133">Transmembrane helix</keyword>
<keyword id="KW-0813">Transport</keyword>
<organism>
    <name type="scientific">Prochlorococcus marinus (strain MIT 9515)</name>
    <dbReference type="NCBI Taxonomy" id="167542"/>
    <lineage>
        <taxon>Bacteria</taxon>
        <taxon>Bacillati</taxon>
        <taxon>Cyanobacteriota</taxon>
        <taxon>Cyanophyceae</taxon>
        <taxon>Synechococcales</taxon>
        <taxon>Prochlorococcaceae</taxon>
        <taxon>Prochlorococcus</taxon>
    </lineage>
</organism>
<gene>
    <name evidence="1" type="primary">psbE</name>
    <name type="ordered locus">P9515_03301</name>
</gene>
<reference key="1">
    <citation type="journal article" date="2007" name="PLoS Genet.">
        <title>Patterns and implications of gene gain and loss in the evolution of Prochlorococcus.</title>
        <authorList>
            <person name="Kettler G.C."/>
            <person name="Martiny A.C."/>
            <person name="Huang K."/>
            <person name="Zucker J."/>
            <person name="Coleman M.L."/>
            <person name="Rodrigue S."/>
            <person name="Chen F."/>
            <person name="Lapidus A."/>
            <person name="Ferriera S."/>
            <person name="Johnson J."/>
            <person name="Steglich C."/>
            <person name="Church G.M."/>
            <person name="Richardson P."/>
            <person name="Chisholm S.W."/>
        </authorList>
    </citation>
    <scope>NUCLEOTIDE SEQUENCE [LARGE SCALE GENOMIC DNA]</scope>
    <source>
        <strain>MIT 9515</strain>
    </source>
</reference>
<comment type="function">
    <text evidence="1">This b-type cytochrome is tightly associated with the reaction center of photosystem II (PSII). PSII is a light-driven water:plastoquinone oxidoreductase that uses light energy to abstract electrons from H(2)O, generating O(2) and a proton gradient subsequently used for ATP formation. It consists of a core antenna complex that captures photons, and an electron transfer chain that converts photonic excitation into a charge separation.</text>
</comment>
<comment type="cofactor">
    <cofactor evidence="1">
        <name>heme b</name>
        <dbReference type="ChEBI" id="CHEBI:60344"/>
    </cofactor>
    <text evidence="1">With its partner (PsbF) binds heme. PSII binds additional chlorophylls, carotenoids and specific lipids.</text>
</comment>
<comment type="subunit">
    <text evidence="2">Heterodimer of an alpha subunit and a beta subunit. PSII is composed of 1 copy each of membrane proteins PsbA, PsbB, PsbC, PsbD, PsbE, PsbF, PsbH, PsbI, PsbJ, PsbK, PsbL, PsbM, PsbT, PsbX, PsbY, Psb30/Ycf12, peripheral proteins PsbO, CyanoQ (PsbQ), PsbU, PsbV and a large number of cofactors. It forms dimeric complexes.</text>
</comment>
<comment type="subcellular location">
    <subcellularLocation>
        <location evidence="1">Cellular thylakoid membrane</location>
        <topology evidence="1">Single-pass membrane protein</topology>
    </subcellularLocation>
</comment>
<comment type="similarity">
    <text evidence="1">Belongs to the PsbE/PsbF family.</text>
</comment>
<dbReference type="EMBL" id="CP000552">
    <property type="protein sequence ID" value="ABM71539.1"/>
    <property type="molecule type" value="Genomic_DNA"/>
</dbReference>
<dbReference type="RefSeq" id="WP_011819648.1">
    <property type="nucleotide sequence ID" value="NC_008817.1"/>
</dbReference>
<dbReference type="SMR" id="A2BUS8"/>
<dbReference type="STRING" id="167542.P9515_03301"/>
<dbReference type="GeneID" id="60200402"/>
<dbReference type="KEGG" id="pmc:P9515_03301"/>
<dbReference type="eggNOG" id="ENOG5032RR6">
    <property type="taxonomic scope" value="Bacteria"/>
</dbReference>
<dbReference type="HOGENOM" id="CLU_194095_0_0_3"/>
<dbReference type="OrthoDB" id="514620at2"/>
<dbReference type="Proteomes" id="UP000001589">
    <property type="component" value="Chromosome"/>
</dbReference>
<dbReference type="GO" id="GO:0009523">
    <property type="term" value="C:photosystem II"/>
    <property type="evidence" value="ECO:0007669"/>
    <property type="project" value="UniProtKB-KW"/>
</dbReference>
<dbReference type="GO" id="GO:0031676">
    <property type="term" value="C:plasma membrane-derived thylakoid membrane"/>
    <property type="evidence" value="ECO:0007669"/>
    <property type="project" value="UniProtKB-SubCell"/>
</dbReference>
<dbReference type="GO" id="GO:0009055">
    <property type="term" value="F:electron transfer activity"/>
    <property type="evidence" value="ECO:0007669"/>
    <property type="project" value="UniProtKB-UniRule"/>
</dbReference>
<dbReference type="GO" id="GO:0020037">
    <property type="term" value="F:heme binding"/>
    <property type="evidence" value="ECO:0007669"/>
    <property type="project" value="InterPro"/>
</dbReference>
<dbReference type="GO" id="GO:0005506">
    <property type="term" value="F:iron ion binding"/>
    <property type="evidence" value="ECO:0007669"/>
    <property type="project" value="UniProtKB-UniRule"/>
</dbReference>
<dbReference type="GO" id="GO:0009767">
    <property type="term" value="P:photosynthetic electron transport chain"/>
    <property type="evidence" value="ECO:0007669"/>
    <property type="project" value="InterPro"/>
</dbReference>
<dbReference type="Gene3D" id="1.20.5.860">
    <property type="entry name" value="Photosystem II cytochrome b559, alpha subunit"/>
    <property type="match status" value="1"/>
</dbReference>
<dbReference type="HAMAP" id="MF_00642">
    <property type="entry name" value="PSII_PsbE"/>
    <property type="match status" value="1"/>
</dbReference>
<dbReference type="InterPro" id="IPR006217">
    <property type="entry name" value="PSII_cyt_b559_asu"/>
</dbReference>
<dbReference type="InterPro" id="IPR037025">
    <property type="entry name" value="PSII_cyt_b559_asu_sf"/>
</dbReference>
<dbReference type="InterPro" id="IPR013081">
    <property type="entry name" value="PSII_cyt_b559_N"/>
</dbReference>
<dbReference type="InterPro" id="IPR013082">
    <property type="entry name" value="PSII_cytb559_asu_lum"/>
</dbReference>
<dbReference type="NCBIfam" id="TIGR01332">
    <property type="entry name" value="cyt_b559_alpha"/>
    <property type="match status" value="1"/>
</dbReference>
<dbReference type="PANTHER" id="PTHR33391">
    <property type="entry name" value="CYTOCHROME B559 SUBUNIT BETA-RELATED"/>
    <property type="match status" value="1"/>
</dbReference>
<dbReference type="PANTHER" id="PTHR33391:SF9">
    <property type="entry name" value="CYTOCHROME B559 SUBUNIT BETA-RELATED"/>
    <property type="match status" value="1"/>
</dbReference>
<dbReference type="Pfam" id="PF00283">
    <property type="entry name" value="Cytochrom_B559"/>
    <property type="match status" value="1"/>
</dbReference>
<dbReference type="Pfam" id="PF00284">
    <property type="entry name" value="Cytochrom_B559a"/>
    <property type="match status" value="1"/>
</dbReference>
<dbReference type="PIRSF" id="PIRSF000036">
    <property type="entry name" value="PsbE"/>
    <property type="match status" value="1"/>
</dbReference>
<dbReference type="SUPFAM" id="SSF161045">
    <property type="entry name" value="Cytochrome b559 subunits"/>
    <property type="match status" value="1"/>
</dbReference>
<evidence type="ECO:0000255" key="1">
    <source>
        <dbReference type="HAMAP-Rule" id="MF_00642"/>
    </source>
</evidence>
<evidence type="ECO:0000305" key="2"/>
<feature type="chain" id="PRO_1000056930" description="Cytochrome b559 subunit alpha">
    <location>
        <begin position="1"/>
        <end position="82"/>
    </location>
</feature>
<feature type="transmembrane region" description="Helical" evidence="1">
    <location>
        <begin position="22"/>
        <end position="36"/>
    </location>
</feature>
<feature type="binding site" description="axial binding residue" evidence="1">
    <location>
        <position position="24"/>
    </location>
    <ligand>
        <name>heme</name>
        <dbReference type="ChEBI" id="CHEBI:30413"/>
        <note>ligand shared with beta subunit</note>
    </ligand>
    <ligandPart>
        <name>Fe</name>
        <dbReference type="ChEBI" id="CHEBI:18248"/>
    </ligandPart>
</feature>
<protein>
    <recommendedName>
        <fullName evidence="1">Cytochrome b559 subunit alpha</fullName>
    </recommendedName>
    <alternativeName>
        <fullName evidence="1">PSII reaction center subunit V</fullName>
    </alternativeName>
</protein>
<name>PSBE_PROM5</name>
<accession>A2BUS8</accession>